<organism>
    <name type="scientific">Thermofilum pendens (strain DSM 2475 / Hrk 5)</name>
    <dbReference type="NCBI Taxonomy" id="368408"/>
    <lineage>
        <taxon>Archaea</taxon>
        <taxon>Thermoproteota</taxon>
        <taxon>Thermoprotei</taxon>
        <taxon>Thermofilales</taxon>
        <taxon>Thermofilaceae</taxon>
        <taxon>Thermofilum</taxon>
    </lineage>
</organism>
<comment type="function">
    <text evidence="1">DNA-dependent RNA polymerase (RNAP) catalyzes the transcription of DNA into RNA using the four ribonucleoside triphosphates as substrates.</text>
</comment>
<comment type="catalytic activity">
    <reaction evidence="1">
        <text>RNA(n) + a ribonucleoside 5'-triphosphate = RNA(n+1) + diphosphate</text>
        <dbReference type="Rhea" id="RHEA:21248"/>
        <dbReference type="Rhea" id="RHEA-COMP:14527"/>
        <dbReference type="Rhea" id="RHEA-COMP:17342"/>
        <dbReference type="ChEBI" id="CHEBI:33019"/>
        <dbReference type="ChEBI" id="CHEBI:61557"/>
        <dbReference type="ChEBI" id="CHEBI:140395"/>
        <dbReference type="EC" id="2.7.7.6"/>
    </reaction>
</comment>
<comment type="subunit">
    <text evidence="1">Part of the RNA polymerase complex.</text>
</comment>
<comment type="subcellular location">
    <subcellularLocation>
        <location evidence="1">Cytoplasm</location>
    </subcellularLocation>
</comment>
<comment type="similarity">
    <text evidence="1">Belongs to the archaeal Rpo5/eukaryotic RPB5 RNA polymerase subunit family.</text>
</comment>
<reference key="1">
    <citation type="journal article" date="2008" name="J. Bacteriol.">
        <title>Genome sequence of Thermofilum pendens reveals an exceptional loss of biosynthetic pathways without genome reduction.</title>
        <authorList>
            <person name="Anderson I."/>
            <person name="Rodriguez J."/>
            <person name="Susanti D."/>
            <person name="Porat I."/>
            <person name="Reich C."/>
            <person name="Ulrich L.E."/>
            <person name="Elkins J.G."/>
            <person name="Mavromatis K."/>
            <person name="Lykidis A."/>
            <person name="Kim E."/>
            <person name="Thompson L.S."/>
            <person name="Nolan M."/>
            <person name="Land M."/>
            <person name="Copeland A."/>
            <person name="Lapidus A."/>
            <person name="Lucas S."/>
            <person name="Detter C."/>
            <person name="Zhulin I.B."/>
            <person name="Olsen G.J."/>
            <person name="Whitman W."/>
            <person name="Mukhopadhyay B."/>
            <person name="Bristow J."/>
            <person name="Kyrpides N."/>
        </authorList>
    </citation>
    <scope>NUCLEOTIDE SEQUENCE [LARGE SCALE GENOMIC DNA]</scope>
    <source>
        <strain>DSM 2475 / Hrk 5</strain>
    </source>
</reference>
<accession>A1RWW7</accession>
<protein>
    <recommendedName>
        <fullName evidence="1">DNA-directed RNA polymerase subunit Rpo5</fullName>
        <ecNumber evidence="1">2.7.7.6</ecNumber>
    </recommendedName>
    <alternativeName>
        <fullName evidence="1">DNA-directed RNA polymerase subunit H</fullName>
    </alternativeName>
</protein>
<proteinExistence type="inferred from homology"/>
<dbReference type="EC" id="2.7.7.6" evidence="1"/>
<dbReference type="EMBL" id="CP000505">
    <property type="protein sequence ID" value="ABL77697.1"/>
    <property type="molecule type" value="Genomic_DNA"/>
</dbReference>
<dbReference type="RefSeq" id="WP_011751962.1">
    <property type="nucleotide sequence ID" value="NC_008698.1"/>
</dbReference>
<dbReference type="SMR" id="A1RWW7"/>
<dbReference type="STRING" id="368408.Tpen_0287"/>
<dbReference type="EnsemblBacteria" id="ABL77697">
    <property type="protein sequence ID" value="ABL77697"/>
    <property type="gene ID" value="Tpen_0287"/>
</dbReference>
<dbReference type="GeneID" id="4602097"/>
<dbReference type="KEGG" id="tpe:Tpen_0287"/>
<dbReference type="eggNOG" id="arCOG04258">
    <property type="taxonomic scope" value="Archaea"/>
</dbReference>
<dbReference type="HOGENOM" id="CLU_058320_4_0_2"/>
<dbReference type="OrthoDB" id="30537at2157"/>
<dbReference type="Proteomes" id="UP000000641">
    <property type="component" value="Chromosome"/>
</dbReference>
<dbReference type="GO" id="GO:0005737">
    <property type="term" value="C:cytoplasm"/>
    <property type="evidence" value="ECO:0007669"/>
    <property type="project" value="UniProtKB-SubCell"/>
</dbReference>
<dbReference type="GO" id="GO:0000428">
    <property type="term" value="C:DNA-directed RNA polymerase complex"/>
    <property type="evidence" value="ECO:0007669"/>
    <property type="project" value="UniProtKB-KW"/>
</dbReference>
<dbReference type="GO" id="GO:0003677">
    <property type="term" value="F:DNA binding"/>
    <property type="evidence" value="ECO:0007669"/>
    <property type="project" value="InterPro"/>
</dbReference>
<dbReference type="GO" id="GO:0003899">
    <property type="term" value="F:DNA-directed RNA polymerase activity"/>
    <property type="evidence" value="ECO:0007669"/>
    <property type="project" value="UniProtKB-UniRule"/>
</dbReference>
<dbReference type="GO" id="GO:0006366">
    <property type="term" value="P:transcription by RNA polymerase II"/>
    <property type="evidence" value="ECO:0007669"/>
    <property type="project" value="TreeGrafter"/>
</dbReference>
<dbReference type="GO" id="GO:0006362">
    <property type="term" value="P:transcription elongation by RNA polymerase I"/>
    <property type="evidence" value="ECO:0007669"/>
    <property type="project" value="TreeGrafter"/>
</dbReference>
<dbReference type="GO" id="GO:0042797">
    <property type="term" value="P:tRNA transcription by RNA polymerase III"/>
    <property type="evidence" value="ECO:0007669"/>
    <property type="project" value="TreeGrafter"/>
</dbReference>
<dbReference type="Gene3D" id="3.90.940.20">
    <property type="entry name" value="RPB5-like RNA polymerase subunit"/>
    <property type="match status" value="1"/>
</dbReference>
<dbReference type="HAMAP" id="MF_00025">
    <property type="entry name" value="RNApol_Rpo5_RPB5"/>
    <property type="match status" value="1"/>
</dbReference>
<dbReference type="InterPro" id="IPR014381">
    <property type="entry name" value="Arch_Rpo5/euc_Rpb5"/>
</dbReference>
<dbReference type="InterPro" id="IPR000783">
    <property type="entry name" value="RNA_pol_subH/Rpb5_C"/>
</dbReference>
<dbReference type="InterPro" id="IPR020608">
    <property type="entry name" value="RNA_pol_subH/Rpb5_CS"/>
</dbReference>
<dbReference type="InterPro" id="IPR035913">
    <property type="entry name" value="RPB5-like_sf"/>
</dbReference>
<dbReference type="NCBIfam" id="NF007129">
    <property type="entry name" value="PRK09570.1"/>
    <property type="match status" value="1"/>
</dbReference>
<dbReference type="PANTHER" id="PTHR10535">
    <property type="entry name" value="DNA-DIRECTED RNA POLYMERASES I, II, AND III SUBUNIT RPABC1"/>
    <property type="match status" value="1"/>
</dbReference>
<dbReference type="PANTHER" id="PTHR10535:SF0">
    <property type="entry name" value="DNA-DIRECTED RNA POLYMERASES I, II, AND III SUBUNIT RPABC1"/>
    <property type="match status" value="1"/>
</dbReference>
<dbReference type="Pfam" id="PF01191">
    <property type="entry name" value="RNA_pol_Rpb5_C"/>
    <property type="match status" value="1"/>
</dbReference>
<dbReference type="SUPFAM" id="SSF55287">
    <property type="entry name" value="RPB5-like RNA polymerase subunit"/>
    <property type="match status" value="1"/>
</dbReference>
<dbReference type="PROSITE" id="PS01110">
    <property type="entry name" value="RNA_POL_H_23KD"/>
    <property type="match status" value="1"/>
</dbReference>
<feature type="chain" id="PRO_1000074388" description="DNA-directed RNA polymerase subunit Rpo5">
    <location>
        <begin position="1"/>
        <end position="80"/>
    </location>
</feature>
<keyword id="KW-0963">Cytoplasm</keyword>
<keyword id="KW-0240">DNA-directed RNA polymerase</keyword>
<keyword id="KW-0548">Nucleotidyltransferase</keyword>
<keyword id="KW-1185">Reference proteome</keyword>
<keyword id="KW-0804">Transcription</keyword>
<keyword id="KW-0808">Transferase</keyword>
<name>RPO5_THEPD</name>
<sequence>MPRKFDVLEHELVPKHVLLSKEEANRLLKAMGLKKSELPWIYSTDPVARALKAKPGDVIMIIRQSPTAGESVAFRLVMRG</sequence>
<evidence type="ECO:0000255" key="1">
    <source>
        <dbReference type="HAMAP-Rule" id="MF_00025"/>
    </source>
</evidence>
<gene>
    <name evidence="1" type="primary">rpo5</name>
    <name evidence="1" type="synonym">rpoH</name>
    <name type="ordered locus">Tpen_0287</name>
</gene>